<comment type="function">
    <text evidence="1">Catalyzes the interconversion of methylthioribose-1-phosphate (MTR-1-P) into methylthioribulose-1-phosphate (MTRu-1-P).</text>
</comment>
<comment type="catalytic activity">
    <reaction evidence="1">
        <text>5-(methylsulfanyl)-alpha-D-ribose 1-phosphate = 5-(methylsulfanyl)-D-ribulose 1-phosphate</text>
        <dbReference type="Rhea" id="RHEA:19989"/>
        <dbReference type="ChEBI" id="CHEBI:58533"/>
        <dbReference type="ChEBI" id="CHEBI:58548"/>
        <dbReference type="EC" id="5.3.1.23"/>
    </reaction>
</comment>
<comment type="pathway">
    <text evidence="1">Amino-acid biosynthesis; L-methionine biosynthesis via salvage pathway; L-methionine from S-methyl-5-thio-alpha-D-ribose 1-phosphate: step 1/6.</text>
</comment>
<comment type="similarity">
    <text evidence="2">Belongs to the eIF-2B alpha/beta/delta subunits family. MtnA subfamily.</text>
</comment>
<protein>
    <recommendedName>
        <fullName evidence="1">Methylthioribose-1-phosphate isomerase</fullName>
        <shortName evidence="1">M1Pi</shortName>
        <shortName evidence="1">MTR-1-P isomerase</shortName>
        <ecNumber evidence="1">5.3.1.23</ecNumber>
    </recommendedName>
    <alternativeName>
        <fullName evidence="1">S-methyl-5-thioribose-1-phosphate isomerase</fullName>
    </alternativeName>
</protein>
<proteinExistence type="inferred from homology"/>
<reference key="1">
    <citation type="submission" date="2008-05" db="EMBL/GenBank/DDBJ databases">
        <title>Complete sequence of chromosome of Geobacter lovleyi SZ.</title>
        <authorList>
            <consortium name="US DOE Joint Genome Institute"/>
            <person name="Lucas S."/>
            <person name="Copeland A."/>
            <person name="Lapidus A."/>
            <person name="Glavina del Rio T."/>
            <person name="Dalin E."/>
            <person name="Tice H."/>
            <person name="Bruce D."/>
            <person name="Goodwin L."/>
            <person name="Pitluck S."/>
            <person name="Chertkov O."/>
            <person name="Meincke L."/>
            <person name="Brettin T."/>
            <person name="Detter J.C."/>
            <person name="Han C."/>
            <person name="Tapia R."/>
            <person name="Kuske C.R."/>
            <person name="Schmutz J."/>
            <person name="Larimer F."/>
            <person name="Land M."/>
            <person name="Hauser L."/>
            <person name="Kyrpides N."/>
            <person name="Mikhailova N."/>
            <person name="Sung Y."/>
            <person name="Fletcher K.E."/>
            <person name="Ritalahti K.M."/>
            <person name="Loeffler F.E."/>
            <person name="Richardson P."/>
        </authorList>
    </citation>
    <scope>NUCLEOTIDE SEQUENCE [LARGE SCALE GENOMIC DNA]</scope>
    <source>
        <strain>ATCC BAA-1151 / DSM 17278 / SZ</strain>
    </source>
</reference>
<dbReference type="EC" id="5.3.1.23" evidence="1"/>
<dbReference type="EMBL" id="CP001089">
    <property type="protein sequence ID" value="ACD97297.1"/>
    <property type="molecule type" value="Genomic_DNA"/>
</dbReference>
<dbReference type="RefSeq" id="WP_012471615.1">
    <property type="nucleotide sequence ID" value="NC_010814.1"/>
</dbReference>
<dbReference type="SMR" id="B3E3M5"/>
<dbReference type="STRING" id="398767.Glov_3596"/>
<dbReference type="KEGG" id="glo:Glov_3596"/>
<dbReference type="eggNOG" id="COG0182">
    <property type="taxonomic scope" value="Bacteria"/>
</dbReference>
<dbReference type="HOGENOM" id="CLU_016218_1_2_7"/>
<dbReference type="OrthoDB" id="9803436at2"/>
<dbReference type="UniPathway" id="UPA00904">
    <property type="reaction ID" value="UER00874"/>
</dbReference>
<dbReference type="Proteomes" id="UP000002420">
    <property type="component" value="Chromosome"/>
</dbReference>
<dbReference type="GO" id="GO:0046523">
    <property type="term" value="F:S-methyl-5-thioribose-1-phosphate isomerase activity"/>
    <property type="evidence" value="ECO:0007669"/>
    <property type="project" value="UniProtKB-UniRule"/>
</dbReference>
<dbReference type="GO" id="GO:0019509">
    <property type="term" value="P:L-methionine salvage from methylthioadenosine"/>
    <property type="evidence" value="ECO:0007669"/>
    <property type="project" value="UniProtKB-UniRule"/>
</dbReference>
<dbReference type="FunFam" id="1.20.120.420:FF:000003">
    <property type="entry name" value="Methylthioribose-1-phosphate isomerase"/>
    <property type="match status" value="1"/>
</dbReference>
<dbReference type="FunFam" id="3.40.50.10470:FF:000010">
    <property type="entry name" value="Methylthioribose-1-phosphate isomerase"/>
    <property type="match status" value="1"/>
</dbReference>
<dbReference type="Gene3D" id="1.20.120.420">
    <property type="entry name" value="translation initiation factor eif-2b, domain 1"/>
    <property type="match status" value="1"/>
</dbReference>
<dbReference type="Gene3D" id="3.40.50.10470">
    <property type="entry name" value="Translation initiation factor eif-2b, domain 2"/>
    <property type="match status" value="1"/>
</dbReference>
<dbReference type="HAMAP" id="MF_01678">
    <property type="entry name" value="Salvage_MtnA"/>
    <property type="match status" value="1"/>
</dbReference>
<dbReference type="InterPro" id="IPR000649">
    <property type="entry name" value="IF-2B-related"/>
</dbReference>
<dbReference type="InterPro" id="IPR005251">
    <property type="entry name" value="IF-M1Pi"/>
</dbReference>
<dbReference type="InterPro" id="IPR042529">
    <property type="entry name" value="IF_2B-like_C"/>
</dbReference>
<dbReference type="InterPro" id="IPR011559">
    <property type="entry name" value="Initiation_fac_2B_a/b/d"/>
</dbReference>
<dbReference type="InterPro" id="IPR027363">
    <property type="entry name" value="M1Pi_N"/>
</dbReference>
<dbReference type="InterPro" id="IPR037171">
    <property type="entry name" value="NagB/RpiA_transferase-like"/>
</dbReference>
<dbReference type="NCBIfam" id="TIGR00524">
    <property type="entry name" value="eIF-2B_rel"/>
    <property type="match status" value="1"/>
</dbReference>
<dbReference type="NCBIfam" id="NF004326">
    <property type="entry name" value="PRK05720.1"/>
    <property type="match status" value="1"/>
</dbReference>
<dbReference type="NCBIfam" id="TIGR00512">
    <property type="entry name" value="salvage_mtnA"/>
    <property type="match status" value="1"/>
</dbReference>
<dbReference type="PANTHER" id="PTHR43475">
    <property type="entry name" value="METHYLTHIORIBOSE-1-PHOSPHATE ISOMERASE"/>
    <property type="match status" value="1"/>
</dbReference>
<dbReference type="PANTHER" id="PTHR43475:SF1">
    <property type="entry name" value="METHYLTHIORIBOSE-1-PHOSPHATE ISOMERASE"/>
    <property type="match status" value="1"/>
</dbReference>
<dbReference type="Pfam" id="PF01008">
    <property type="entry name" value="IF-2B"/>
    <property type="match status" value="1"/>
</dbReference>
<dbReference type="SUPFAM" id="SSF100950">
    <property type="entry name" value="NagB/RpiA/CoA transferase-like"/>
    <property type="match status" value="1"/>
</dbReference>
<evidence type="ECO:0000255" key="1">
    <source>
        <dbReference type="HAMAP-Rule" id="MF_01678"/>
    </source>
</evidence>
<evidence type="ECO:0000305" key="2"/>
<organism>
    <name type="scientific">Trichlorobacter lovleyi (strain ATCC BAA-1151 / DSM 17278 / SZ)</name>
    <name type="common">Geobacter lovleyi</name>
    <dbReference type="NCBI Taxonomy" id="398767"/>
    <lineage>
        <taxon>Bacteria</taxon>
        <taxon>Pseudomonadati</taxon>
        <taxon>Thermodesulfobacteriota</taxon>
        <taxon>Desulfuromonadia</taxon>
        <taxon>Geobacterales</taxon>
        <taxon>Geobacteraceae</taxon>
        <taxon>Trichlorobacter</taxon>
    </lineage>
</organism>
<keyword id="KW-0028">Amino-acid biosynthesis</keyword>
<keyword id="KW-0413">Isomerase</keyword>
<keyword id="KW-0486">Methionine biosynthesis</keyword>
<keyword id="KW-1185">Reference proteome</keyword>
<gene>
    <name evidence="1" type="primary">mtnA</name>
    <name type="ordered locus">Glov_3596</name>
</gene>
<accession>B3E3M5</accession>
<name>MTNA_TRIL1</name>
<sequence>MSFRTIEWRDDAVIMIDQTRLPMEEVYQRYTDFNAVAEAIRGMVVRGAPAIGVAAAMGVALGAREIIADTQESFFRQLENVCDVMARTRPTAVNLFWAIERMKQKALSLKGNPLETIRTGLKEEAIRIEAEDLAICKNIGRHGADLIPEGATILTHCNAGGLATAGYGTALGVIRAAHEAGKRIQVFSDETRPWLQGARLTTWELMKDSIPVTLISDNMAGFFMSRGEITCCVVGADRIAANGDTANKIGTFSVAVLAREHGIPFYVAAPVSTLDLSLADGSRIPIEERPSTEVTHIRGLPIAPEGVKVRNPSFDVTPAKYITAIITEYGVARGNYTQELAALAAV</sequence>
<feature type="chain" id="PRO_0000357187" description="Methylthioribose-1-phosphate isomerase">
    <location>
        <begin position="1"/>
        <end position="346"/>
    </location>
</feature>
<feature type="active site" description="Proton donor" evidence="1">
    <location>
        <position position="237"/>
    </location>
</feature>
<feature type="binding site" evidence="1">
    <location>
        <begin position="46"/>
        <end position="48"/>
    </location>
    <ligand>
        <name>substrate</name>
    </ligand>
</feature>
<feature type="binding site" evidence="1">
    <location>
        <position position="89"/>
    </location>
    <ligand>
        <name>substrate</name>
    </ligand>
</feature>
<feature type="binding site" evidence="1">
    <location>
        <position position="196"/>
    </location>
    <ligand>
        <name>substrate</name>
    </ligand>
</feature>
<feature type="binding site" evidence="1">
    <location>
        <begin position="247"/>
        <end position="248"/>
    </location>
    <ligand>
        <name>substrate</name>
    </ligand>
</feature>
<feature type="site" description="Transition state stabilizer" evidence="1">
    <location>
        <position position="157"/>
    </location>
</feature>